<dbReference type="EC" id="2.7.11.1" evidence="1"/>
<dbReference type="EMBL" id="AB019236">
    <property type="protein sequence ID" value="BAA97306.1"/>
    <property type="status" value="ALT_SEQ"/>
    <property type="molecule type" value="Genomic_DNA"/>
</dbReference>
<dbReference type="EMBL" id="CP002688">
    <property type="protein sequence ID" value="AED97972.1"/>
    <property type="molecule type" value="Genomic_DNA"/>
</dbReference>
<dbReference type="EMBL" id="CP002688">
    <property type="protein sequence ID" value="AED97973.1"/>
    <property type="molecule type" value="Genomic_DNA"/>
</dbReference>
<dbReference type="EMBL" id="AF361830">
    <property type="protein sequence ID" value="AAK32842.1"/>
    <property type="molecule type" value="mRNA"/>
</dbReference>
<dbReference type="EMBL" id="AY059877">
    <property type="protein sequence ID" value="AAL24359.1"/>
    <property type="molecule type" value="mRNA"/>
</dbReference>
<dbReference type="EMBL" id="AY064044">
    <property type="protein sequence ID" value="AAL36400.1"/>
    <property type="molecule type" value="mRNA"/>
</dbReference>
<dbReference type="EMBL" id="AY096382">
    <property type="protein sequence ID" value="AAM20023.1"/>
    <property type="molecule type" value="mRNA"/>
</dbReference>
<dbReference type="EMBL" id="AK230095">
    <property type="protein sequence ID" value="BAF01914.1"/>
    <property type="molecule type" value="mRNA"/>
</dbReference>
<dbReference type="RefSeq" id="NP_201299.2">
    <property type="nucleotide sequence ID" value="NM_125893.5"/>
</dbReference>
<dbReference type="RefSeq" id="NP_851271.1">
    <property type="nucleotide sequence ID" value="NM_180940.2"/>
</dbReference>
<dbReference type="SMR" id="Q93Y08"/>
<dbReference type="FunCoup" id="Q93Y08">
    <property type="interactions" value="683"/>
</dbReference>
<dbReference type="STRING" id="3702.Q93Y08"/>
<dbReference type="GlyGen" id="Q93Y08">
    <property type="glycosylation" value="1 site"/>
</dbReference>
<dbReference type="iPTMnet" id="Q93Y08"/>
<dbReference type="PaxDb" id="3702-AT5G64940.1"/>
<dbReference type="ProteomicsDB" id="243300"/>
<dbReference type="EnsemblPlants" id="AT5G64940.1">
    <property type="protein sequence ID" value="AT5G64940.1"/>
    <property type="gene ID" value="AT5G64940"/>
</dbReference>
<dbReference type="EnsemblPlants" id="AT5G64940.2">
    <property type="protein sequence ID" value="AT5G64940.2"/>
    <property type="gene ID" value="AT5G64940"/>
</dbReference>
<dbReference type="GeneID" id="836618"/>
<dbReference type="Gramene" id="AT5G64940.1">
    <property type="protein sequence ID" value="AT5G64940.1"/>
    <property type="gene ID" value="AT5G64940"/>
</dbReference>
<dbReference type="Gramene" id="AT5G64940.2">
    <property type="protein sequence ID" value="AT5G64940.2"/>
    <property type="gene ID" value="AT5G64940"/>
</dbReference>
<dbReference type="KEGG" id="ath:AT5G64940"/>
<dbReference type="Araport" id="AT5G64940"/>
<dbReference type="TAIR" id="AT5G64940">
    <property type="gene designation" value="ATH13"/>
</dbReference>
<dbReference type="eggNOG" id="KOG1235">
    <property type="taxonomic scope" value="Eukaryota"/>
</dbReference>
<dbReference type="HOGENOM" id="CLU_006533_0_3_1"/>
<dbReference type="InParanoid" id="Q93Y08"/>
<dbReference type="OMA" id="WVAIFDE"/>
<dbReference type="OrthoDB" id="427480at2759"/>
<dbReference type="PhylomeDB" id="Q93Y08"/>
<dbReference type="PRO" id="PR:Q93Y08"/>
<dbReference type="Proteomes" id="UP000006548">
    <property type="component" value="Chromosome 5"/>
</dbReference>
<dbReference type="ExpressionAtlas" id="Q93Y08">
    <property type="expression patterns" value="baseline and differential"/>
</dbReference>
<dbReference type="GO" id="GO:0009507">
    <property type="term" value="C:chloroplast"/>
    <property type="evidence" value="ECO:0007005"/>
    <property type="project" value="TAIR"/>
</dbReference>
<dbReference type="GO" id="GO:0009941">
    <property type="term" value="C:chloroplast envelope"/>
    <property type="evidence" value="ECO:0000314"/>
    <property type="project" value="UniProtKB"/>
</dbReference>
<dbReference type="GO" id="GO:0031969">
    <property type="term" value="C:chloroplast membrane"/>
    <property type="evidence" value="ECO:0007669"/>
    <property type="project" value="UniProtKB-SubCell"/>
</dbReference>
<dbReference type="GO" id="GO:0009536">
    <property type="term" value="C:plastid"/>
    <property type="evidence" value="ECO:0007005"/>
    <property type="project" value="TAIR"/>
</dbReference>
<dbReference type="GO" id="GO:0005524">
    <property type="term" value="F:ATP binding"/>
    <property type="evidence" value="ECO:0007669"/>
    <property type="project" value="UniProtKB-KW"/>
</dbReference>
<dbReference type="GO" id="GO:0106310">
    <property type="term" value="F:protein serine kinase activity"/>
    <property type="evidence" value="ECO:0007669"/>
    <property type="project" value="RHEA"/>
</dbReference>
<dbReference type="GO" id="GO:0004674">
    <property type="term" value="F:protein serine/threonine kinase activity"/>
    <property type="evidence" value="ECO:0007669"/>
    <property type="project" value="UniProtKB-EC"/>
</dbReference>
<dbReference type="GO" id="GO:0034599">
    <property type="term" value="P:cellular response to oxidative stress"/>
    <property type="evidence" value="ECO:0000315"/>
    <property type="project" value="UniProtKB"/>
</dbReference>
<dbReference type="GO" id="GO:0007623">
    <property type="term" value="P:circadian rhythm"/>
    <property type="evidence" value="ECO:0000270"/>
    <property type="project" value="UniProtKB"/>
</dbReference>
<dbReference type="GO" id="GO:0010150">
    <property type="term" value="P:leaf senescence"/>
    <property type="evidence" value="ECO:0000270"/>
    <property type="project" value="UniProtKB"/>
</dbReference>
<dbReference type="GO" id="GO:0046467">
    <property type="term" value="P:membrane lipid biosynthetic process"/>
    <property type="evidence" value="ECO:0000315"/>
    <property type="project" value="TAIR"/>
</dbReference>
<dbReference type="GO" id="GO:1901031">
    <property type="term" value="P:regulation of response to reactive oxygen species"/>
    <property type="evidence" value="ECO:0000315"/>
    <property type="project" value="UniProtKB"/>
</dbReference>
<dbReference type="GO" id="GO:0046686">
    <property type="term" value="P:response to cadmium ion"/>
    <property type="evidence" value="ECO:0000315"/>
    <property type="project" value="UniProtKB"/>
</dbReference>
<dbReference type="GO" id="GO:0009644">
    <property type="term" value="P:response to high light intensity"/>
    <property type="evidence" value="ECO:0000315"/>
    <property type="project" value="UniProtKB"/>
</dbReference>
<dbReference type="GO" id="GO:0042542">
    <property type="term" value="P:response to hydrogen peroxide"/>
    <property type="evidence" value="ECO:0000315"/>
    <property type="project" value="UniProtKB"/>
</dbReference>
<dbReference type="GO" id="GO:1990641">
    <property type="term" value="P:response to iron ion starvation"/>
    <property type="evidence" value="ECO:0000270"/>
    <property type="project" value="UniProtKB"/>
</dbReference>
<dbReference type="GO" id="GO:0006979">
    <property type="term" value="P:response to oxidative stress"/>
    <property type="evidence" value="ECO:0000315"/>
    <property type="project" value="UniProtKB"/>
</dbReference>
<dbReference type="CDD" id="cd05121">
    <property type="entry name" value="ABC1_ADCK3-like"/>
    <property type="match status" value="1"/>
</dbReference>
<dbReference type="InterPro" id="IPR004147">
    <property type="entry name" value="ABC1_dom"/>
</dbReference>
<dbReference type="InterPro" id="IPR011009">
    <property type="entry name" value="Kinase-like_dom_sf"/>
</dbReference>
<dbReference type="InterPro" id="IPR050154">
    <property type="entry name" value="UbiB_kinase"/>
</dbReference>
<dbReference type="PANTHER" id="PTHR10566">
    <property type="entry name" value="CHAPERONE-ACTIVITY OF BC1 COMPLEX CABC1 -RELATED"/>
    <property type="match status" value="1"/>
</dbReference>
<dbReference type="PANTHER" id="PTHR10566:SF115">
    <property type="entry name" value="PROTEIN ACTIVITY OF BC1 COMPLEX KINASE 8, CHLOROPLASTIC"/>
    <property type="match status" value="1"/>
</dbReference>
<dbReference type="Pfam" id="PF03109">
    <property type="entry name" value="ABC1"/>
    <property type="match status" value="1"/>
</dbReference>
<dbReference type="SUPFAM" id="SSF56112">
    <property type="entry name" value="Protein kinase-like (PK-like)"/>
    <property type="match status" value="1"/>
</dbReference>
<accession>Q93Y08</accession>
<accession>Q0WLU3</accession>
<accession>Q9ASU3</accession>
<accession>Q9LV84</accession>
<protein>
    <recommendedName>
        <fullName evidence="9">Protein ACTIVITY OF BC1 COMPLEX KINASE 8, chloroplastic</fullName>
        <shortName evidence="9">ABC1-LIKE KINASE 8</shortName>
        <ecNumber evidence="1">2.7.11.1</ecNumber>
    </recommendedName>
    <alternativeName>
        <fullName evidence="7">ABC2 homolog protein 13</fullName>
        <shortName evidence="7">AtATH13</shortName>
    </alternativeName>
    <alternativeName>
        <fullName evidence="8">Oxidative stress-related ABC1-like protein 1, chloroplastic</fullName>
        <shortName evidence="8">AtOSA1</shortName>
    </alternativeName>
</protein>
<feature type="transit peptide" description="Chloroplast" evidence="10">
    <location>
        <begin position="1"/>
        <end position="57"/>
    </location>
</feature>
<feature type="chain" id="PRO_0000441257" description="Protein ACTIVITY OF BC1 COMPLEX KINASE 8, chloroplastic" evidence="2">
    <location>
        <begin position="58"/>
        <end position="761"/>
    </location>
</feature>
<feature type="transmembrane region" description="Helical" evidence="2">
    <location>
        <begin position="725"/>
        <end position="745"/>
    </location>
</feature>
<feature type="domain" description="Protein kinase" evidence="3">
    <location>
        <begin position="288"/>
        <end position="648"/>
    </location>
</feature>
<feature type="active site" description="Proton acceptor" evidence="3">
    <location>
        <position position="452"/>
    </location>
</feature>
<feature type="binding site" evidence="3">
    <location>
        <begin position="294"/>
        <end position="302"/>
    </location>
    <ligand>
        <name>ATP</name>
        <dbReference type="ChEBI" id="CHEBI:30616"/>
    </ligand>
</feature>
<feature type="binding site" evidence="3">
    <location>
        <position position="315"/>
    </location>
    <ligand>
        <name>ATP</name>
        <dbReference type="ChEBI" id="CHEBI:30616"/>
    </ligand>
</feature>
<feature type="sequence conflict" description="In Ref. 4; BAF01914." evidence="10" ref="4">
    <original>L</original>
    <variation>P</variation>
    <location>
        <position position="680"/>
    </location>
</feature>
<gene>
    <name evidence="9" type="primary">ABC1K8</name>
    <name evidence="7" type="synonym">ATH13</name>
    <name evidence="8" type="synonym">OSA1</name>
    <name evidence="11" type="ordered locus">At5g64940</name>
    <name evidence="12" type="ORF">MXK3.17</name>
</gene>
<reference key="1">
    <citation type="journal article" date="2000" name="DNA Res.">
        <title>Structural analysis of Arabidopsis thaliana chromosome 5. X. Sequence features of the regions of 3,076,755 bp covered by sixty P1 and TAC clones.</title>
        <authorList>
            <person name="Sato S."/>
            <person name="Nakamura Y."/>
            <person name="Kaneko T."/>
            <person name="Katoh T."/>
            <person name="Asamizu E."/>
            <person name="Kotani H."/>
            <person name="Tabata S."/>
        </authorList>
    </citation>
    <scope>NUCLEOTIDE SEQUENCE [LARGE SCALE GENOMIC DNA]</scope>
    <source>
        <strain>cv. Columbia</strain>
    </source>
</reference>
<reference key="2">
    <citation type="journal article" date="2017" name="Plant J.">
        <title>Araport11: a complete reannotation of the Arabidopsis thaliana reference genome.</title>
        <authorList>
            <person name="Cheng C.Y."/>
            <person name="Krishnakumar V."/>
            <person name="Chan A.P."/>
            <person name="Thibaud-Nissen F."/>
            <person name="Schobel S."/>
            <person name="Town C.D."/>
        </authorList>
    </citation>
    <scope>GENOME REANNOTATION</scope>
    <source>
        <strain>cv. Columbia</strain>
    </source>
</reference>
<reference key="3">
    <citation type="journal article" date="2003" name="Science">
        <title>Empirical analysis of transcriptional activity in the Arabidopsis genome.</title>
        <authorList>
            <person name="Yamada K."/>
            <person name="Lim J."/>
            <person name="Dale J.M."/>
            <person name="Chen H."/>
            <person name="Shinn P."/>
            <person name="Palm C.J."/>
            <person name="Southwick A.M."/>
            <person name="Wu H.C."/>
            <person name="Kim C.J."/>
            <person name="Nguyen M."/>
            <person name="Pham P.K."/>
            <person name="Cheuk R.F."/>
            <person name="Karlin-Newmann G."/>
            <person name="Liu S.X."/>
            <person name="Lam B."/>
            <person name="Sakano H."/>
            <person name="Wu T."/>
            <person name="Yu G."/>
            <person name="Miranda M."/>
            <person name="Quach H.L."/>
            <person name="Tripp M."/>
            <person name="Chang C.H."/>
            <person name="Lee J.M."/>
            <person name="Toriumi M.J."/>
            <person name="Chan M.M."/>
            <person name="Tang C.C."/>
            <person name="Onodera C.S."/>
            <person name="Deng J.M."/>
            <person name="Akiyama K."/>
            <person name="Ansari Y."/>
            <person name="Arakawa T."/>
            <person name="Banh J."/>
            <person name="Banno F."/>
            <person name="Bowser L."/>
            <person name="Brooks S.Y."/>
            <person name="Carninci P."/>
            <person name="Chao Q."/>
            <person name="Choy N."/>
            <person name="Enju A."/>
            <person name="Goldsmith A.D."/>
            <person name="Gurjal M."/>
            <person name="Hansen N.F."/>
            <person name="Hayashizaki Y."/>
            <person name="Johnson-Hopson C."/>
            <person name="Hsuan V.W."/>
            <person name="Iida K."/>
            <person name="Karnes M."/>
            <person name="Khan S."/>
            <person name="Koesema E."/>
            <person name="Ishida J."/>
            <person name="Jiang P.X."/>
            <person name="Jones T."/>
            <person name="Kawai J."/>
            <person name="Kamiya A."/>
            <person name="Meyers C."/>
            <person name="Nakajima M."/>
            <person name="Narusaka M."/>
            <person name="Seki M."/>
            <person name="Sakurai T."/>
            <person name="Satou M."/>
            <person name="Tamse R."/>
            <person name="Vaysberg M."/>
            <person name="Wallender E.K."/>
            <person name="Wong C."/>
            <person name="Yamamura Y."/>
            <person name="Yuan S."/>
            <person name="Shinozaki K."/>
            <person name="Davis R.W."/>
            <person name="Theologis A."/>
            <person name="Ecker J.R."/>
        </authorList>
    </citation>
    <scope>NUCLEOTIDE SEQUENCE [LARGE SCALE MRNA]</scope>
    <source>
        <strain>cv. Columbia</strain>
    </source>
</reference>
<reference key="4">
    <citation type="submission" date="2006-07" db="EMBL/GenBank/DDBJ databases">
        <title>Large-scale analysis of RIKEN Arabidopsis full-length (RAFL) cDNAs.</title>
        <authorList>
            <person name="Totoki Y."/>
            <person name="Seki M."/>
            <person name="Ishida J."/>
            <person name="Nakajima M."/>
            <person name="Enju A."/>
            <person name="Kamiya A."/>
            <person name="Narusaka M."/>
            <person name="Shin-i T."/>
            <person name="Nakagawa M."/>
            <person name="Sakamoto N."/>
            <person name="Oishi K."/>
            <person name="Kohara Y."/>
            <person name="Kobayashi M."/>
            <person name="Toyoda A."/>
            <person name="Sakaki Y."/>
            <person name="Sakurai T."/>
            <person name="Iida K."/>
            <person name="Akiyama K."/>
            <person name="Satou M."/>
            <person name="Toyoda T."/>
            <person name="Konagaya A."/>
            <person name="Carninci P."/>
            <person name="Kawai J."/>
            <person name="Hayashizaki Y."/>
            <person name="Shinozaki K."/>
        </authorList>
    </citation>
    <scope>NUCLEOTIDE SEQUENCE [LARGE SCALE MRNA] OF 312-761</scope>
    <source>
        <strain>cv. Columbia</strain>
    </source>
</reference>
<reference key="5">
    <citation type="journal article" date="2001" name="J. Biol. Chem.">
        <title>The Arabidopsis thaliana ABC protein superfamily, a complete inventory.</title>
        <authorList>
            <person name="Sanchez-Fernandez R."/>
            <person name="Davies T.G."/>
            <person name="Coleman J.O."/>
            <person name="Rea P.A."/>
        </authorList>
    </citation>
    <scope>NOMENCLATURE</scope>
</reference>
<reference key="6">
    <citation type="journal article" date="2008" name="Plant Physiol.">
        <title>AtOSA1, a member of the Abc1-like family, as a new factor in cadmium and oxidative stress response.</title>
        <authorList>
            <person name="Jasinski M."/>
            <person name="Sudre D."/>
            <person name="Schansker G."/>
            <person name="Schellenberg M."/>
            <person name="Constant S."/>
            <person name="Martinoia E."/>
            <person name="Bovet L."/>
        </authorList>
    </citation>
    <scope>FUNCTION</scope>
    <scope>DISRUPTION PHENOTYPE</scope>
    <scope>INDUCTION BY CADMIUM</scope>
    <scope>TISSUE SPECIFICITY</scope>
    <scope>SUBCELLULAR LOCATION</scope>
    <source>
        <strain>cv. Columbia</strain>
    </source>
</reference>
<reference key="7">
    <citation type="journal article" date="2012" name="Trends Plant Sci.">
        <title>ABC1K atypical kinases in plants: filling the organellar kinase void.</title>
        <authorList>
            <person name="Lundquist P.K."/>
            <person name="Davis J.I."/>
            <person name="van Wijk K.J."/>
        </authorList>
    </citation>
    <scope>GENE FAMILY</scope>
    <scope>NOMENCLATURE</scope>
</reference>
<reference key="8">
    <citation type="journal article" date="2014" name="New Phytol.">
        <title>AtSIA1 and AtOSA1: two Abc1 proteins involved in oxidative stress responses and iron distribution within chloroplasts.</title>
        <authorList>
            <person name="Manara A."/>
            <person name="DalCorso G."/>
            <person name="Leister D."/>
            <person name="Jahns P."/>
            <person name="Baldan B."/>
            <person name="Furini A."/>
        </authorList>
    </citation>
    <scope>FUNCTION</scope>
    <scope>DISRUPTION PHENOTYPE</scope>
    <scope>TISSUE SPECIFICITY</scope>
    <scope>SUBCELLULAR LOCATION</scope>
    <scope>RESPONSE TO IRON DEPRIVATION</scope>
    <source>
        <strain>cv. Columbia</strain>
    </source>
</reference>
<reference key="9">
    <citation type="journal article" date="2015" name="Plant Cell Physiol.">
        <title>Loss of the atypical kinases ABC1K7 and ABC1K8 changes the lipid composition of the chloroplast membrane.</title>
        <authorList>
            <person name="Manara A."/>
            <person name="DalCorso G."/>
            <person name="Guzzo F."/>
            <person name="Furini A."/>
        </authorList>
    </citation>
    <scope>FUNCTION</scope>
    <scope>DISRUPTION PHENOTYPE</scope>
    <source>
        <strain>cv. Columbia</strain>
    </source>
</reference>
<organism>
    <name type="scientific">Arabidopsis thaliana</name>
    <name type="common">Mouse-ear cress</name>
    <dbReference type="NCBI Taxonomy" id="3702"/>
    <lineage>
        <taxon>Eukaryota</taxon>
        <taxon>Viridiplantae</taxon>
        <taxon>Streptophyta</taxon>
        <taxon>Embryophyta</taxon>
        <taxon>Tracheophyta</taxon>
        <taxon>Spermatophyta</taxon>
        <taxon>Magnoliopsida</taxon>
        <taxon>eudicotyledons</taxon>
        <taxon>Gunneridae</taxon>
        <taxon>Pentapetalae</taxon>
        <taxon>rosids</taxon>
        <taxon>malvids</taxon>
        <taxon>Brassicales</taxon>
        <taxon>Brassicaceae</taxon>
        <taxon>Camelineae</taxon>
        <taxon>Arabidopsis</taxon>
    </lineage>
</organism>
<sequence length="761" mass="86023">MATSSSSSSSLLLPNINFNSRQSPTITRSVSIAGIFLPRNRLSYNHNLRIRTRLIRASKDDNVAVEDRDNAVKINGDYNGSARLNGNGSARKSVNGDFNGSARLNGNGSLVKYVNGSVTVETEEVTKKRKEEVRKKRVEDIGQEDAWFKNNTQQKQVEVSVTPGGRWNRFKTYSTIQRTLEIWGFVVQFIFRTWLSNKKFSYKGGMTEEKKVLRRKVLAKWLKENILRLGPTFIKIGQQFSTRVDILPQEYVDQLSELQDQVPPFPSATALSIVEEELGGSVEDIFDRFDYEPIAAASLGQVHRARLKGQEVVLKVQRPGLKDLFDIDLKNLRVIAEYLQKVDPKSDGAKRDWVAIYDECASVLYQEIDYTKEAANSELFANNFKDLEYVKVPSIYWEYTTPQVLTMEYVPGIKINKIQALDQLGVDRKRLGRYAVESYLEQILSHGFFHADPHPGNIAVDDVNGGRLIFYDFGMMGSISPNIREGLLEAFYGVYEKDPDKVLQAMVQMGVLVPTGDLTAVRRTALFFLNSFEERLAAQRKEKEEIAAAEELGFKKPLSKEEKQEKKKQRLAAIGEDLLAIAADQPFRFPATFTFVVRAFSVLDGIGKGLDPRFDITEIAKPYALELLRFREAGVEVVVKDLRKRWDRQSQAFYNLFRQADRVEKLAVVIERLEQGDLKLRVRALESERAFQRVAAVQKTVGSAVAAGSLVNLATILYLNSIKTPATIAYTVCAFFSLQVLIGIIKVKKFDQREKLITGTA</sequence>
<keyword id="KW-0067">ATP-binding</keyword>
<keyword id="KW-0105">Cadmium resistance</keyword>
<keyword id="KW-0150">Chloroplast</keyword>
<keyword id="KW-0418">Kinase</keyword>
<keyword id="KW-0443">Lipid metabolism</keyword>
<keyword id="KW-0472">Membrane</keyword>
<keyword id="KW-0547">Nucleotide-binding</keyword>
<keyword id="KW-0934">Plastid</keyword>
<keyword id="KW-1185">Reference proteome</keyword>
<keyword id="KW-0346">Stress response</keyword>
<keyword id="KW-0808">Transferase</keyword>
<keyword id="KW-0809">Transit peptide</keyword>
<keyword id="KW-0812">Transmembrane</keyword>
<keyword id="KW-1133">Transmembrane helix</keyword>
<name>AB1K8_ARATH</name>
<evidence type="ECO:0000250" key="1">
    <source>
        <dbReference type="UniProtKB" id="Q9MA15"/>
    </source>
</evidence>
<evidence type="ECO:0000255" key="2"/>
<evidence type="ECO:0000255" key="3">
    <source>
        <dbReference type="PROSITE-ProRule" id="PRU00159"/>
    </source>
</evidence>
<evidence type="ECO:0000269" key="4">
    <source>
    </source>
</evidence>
<evidence type="ECO:0000269" key="5">
    <source>
    </source>
</evidence>
<evidence type="ECO:0000269" key="6">
    <source>
    </source>
</evidence>
<evidence type="ECO:0000303" key="7">
    <source>
    </source>
</evidence>
<evidence type="ECO:0000303" key="8">
    <source>
    </source>
</evidence>
<evidence type="ECO:0000303" key="9">
    <source>
    </source>
</evidence>
<evidence type="ECO:0000305" key="10"/>
<evidence type="ECO:0000312" key="11">
    <source>
        <dbReference type="Araport" id="AT5G64940"/>
    </source>
</evidence>
<evidence type="ECO:0000312" key="12">
    <source>
        <dbReference type="EMBL" id="BAA97306.1"/>
    </source>
</evidence>
<proteinExistence type="evidence at transcript level"/>
<comment type="function">
    <text evidence="4 5 6">Involved in resistance to oxidative stress (e.g. hydrogen peroxide H(2)O(2)), high light and heavy metals (e.g. cadmium ions Cd(2+)) (PubMed:18390807, PubMed:24117441). Influences responses to reactive oxygen species (ROS) production. Together with SIA1, regulates iron distribution within the chloroplast and mediates the oxidative stress response (PubMed:24117441). Together with ABC1K7, influences chloroplast lipid synthesis/accumulation and modulates chloroplast membrane composition in response to stress (PubMed:25809944).</text>
</comment>
<comment type="catalytic activity">
    <reaction evidence="1">
        <text>L-seryl-[protein] + ATP = O-phospho-L-seryl-[protein] + ADP + H(+)</text>
        <dbReference type="Rhea" id="RHEA:17989"/>
        <dbReference type="Rhea" id="RHEA-COMP:9863"/>
        <dbReference type="Rhea" id="RHEA-COMP:11604"/>
        <dbReference type="ChEBI" id="CHEBI:15378"/>
        <dbReference type="ChEBI" id="CHEBI:29999"/>
        <dbReference type="ChEBI" id="CHEBI:30616"/>
        <dbReference type="ChEBI" id="CHEBI:83421"/>
        <dbReference type="ChEBI" id="CHEBI:456216"/>
        <dbReference type="EC" id="2.7.11.1"/>
    </reaction>
</comment>
<comment type="catalytic activity">
    <reaction evidence="1">
        <text>L-threonyl-[protein] + ATP = O-phospho-L-threonyl-[protein] + ADP + H(+)</text>
        <dbReference type="Rhea" id="RHEA:46608"/>
        <dbReference type="Rhea" id="RHEA-COMP:11060"/>
        <dbReference type="Rhea" id="RHEA-COMP:11605"/>
        <dbReference type="ChEBI" id="CHEBI:15378"/>
        <dbReference type="ChEBI" id="CHEBI:30013"/>
        <dbReference type="ChEBI" id="CHEBI:30616"/>
        <dbReference type="ChEBI" id="CHEBI:61977"/>
        <dbReference type="ChEBI" id="CHEBI:456216"/>
        <dbReference type="EC" id="2.7.11.1"/>
    </reaction>
</comment>
<comment type="subcellular location">
    <subcellularLocation>
        <location evidence="4 5">Plastid</location>
        <location evidence="4 5">Chloroplast envelope</location>
    </subcellularLocation>
    <subcellularLocation>
        <location evidence="4 5">Plastid</location>
        <location evidence="4 5">Chloroplast membrane</location>
        <topology evidence="2">Single-pass membrane protein</topology>
    </subcellularLocation>
</comment>
<comment type="tissue specificity">
    <text evidence="4 5">Mostly expressed in leaves and flowers, and, to a lower extent, in stems, siliques and roots.</text>
</comment>
<comment type="induction">
    <text evidence="4 5">By cadmium ions Cd(2+). Progressively repressed in senescent leaves. Levels follow a circadian rhythm, with lower levels during the night (PubMed:18390807). Down-regulated in response to iron deprivation (PubMed:24117441).</text>
</comment>
<comment type="disruption phenotype">
    <text evidence="4 5 6">Increased sensitivity toward oxidative stress (e.g. hydrogen peroxide H(2)O(2)), high light and cadmium ions Cd(2+). Higher superoxide dismutase activities in chloroplast and disturbed expression of genes involved in the antioxidant pathway (PubMed:18390807). Pale green plants. The pale green double mutant atsia1 atosa1 accumulates ferritin and superoxides, exhibits an increased nonphotochemical quenching (NPQ), and have a reduced tolerance to reactive oxygen species (ROS) (PubMed:24117441). Lower levels of the highly unsaturated lipid digalactosyldiacylglycerol (DGDG) and of different forms of monogalactosyldiacylglycerol (MGDG) and kaempferol. Higher levels of oxylipin-conjugated DGDG and sinapates. The abc1k7 abc1k8 double mutant accumulates strong levels of oxylipin-conjugated MGDG and DGDG (PubMed:25809944).</text>
</comment>
<comment type="similarity">
    <text evidence="10">Belongs to the protein kinase superfamily. ADCK protein kinase family.</text>
</comment>
<comment type="sequence caution" evidence="10">
    <conflict type="erroneous gene model prediction">
        <sequence resource="EMBL-CDS" id="BAA97306"/>
    </conflict>
</comment>